<comment type="function">
    <text evidence="1">Aspartyl-tRNA synthetase with relaxed tRNA specificity since it is able to aspartylate not only its cognate tRNA(Asp) but also tRNA(Asn). Reaction proceeds in two steps: L-aspartate is first activated by ATP to form Asp-AMP and then transferred to the acceptor end of tRNA(Asp/Asn).</text>
</comment>
<comment type="catalytic activity">
    <reaction evidence="1">
        <text>tRNA(Asx) + L-aspartate + ATP = L-aspartyl-tRNA(Asx) + AMP + diphosphate</text>
        <dbReference type="Rhea" id="RHEA:18349"/>
        <dbReference type="Rhea" id="RHEA-COMP:9710"/>
        <dbReference type="Rhea" id="RHEA-COMP:9711"/>
        <dbReference type="ChEBI" id="CHEBI:29991"/>
        <dbReference type="ChEBI" id="CHEBI:30616"/>
        <dbReference type="ChEBI" id="CHEBI:33019"/>
        <dbReference type="ChEBI" id="CHEBI:78442"/>
        <dbReference type="ChEBI" id="CHEBI:78516"/>
        <dbReference type="ChEBI" id="CHEBI:456215"/>
        <dbReference type="EC" id="6.1.1.23"/>
    </reaction>
</comment>
<comment type="subunit">
    <text evidence="1">Homodimer.</text>
</comment>
<comment type="subcellular location">
    <subcellularLocation>
        <location evidence="1">Cytoplasm</location>
    </subcellularLocation>
</comment>
<comment type="similarity">
    <text evidence="1">Belongs to the class-II aminoacyl-tRNA synthetase family. Type 1 subfamily.</text>
</comment>
<keyword id="KW-0030">Aminoacyl-tRNA synthetase</keyword>
<keyword id="KW-0067">ATP-binding</keyword>
<keyword id="KW-0963">Cytoplasm</keyword>
<keyword id="KW-0436">Ligase</keyword>
<keyword id="KW-0547">Nucleotide-binding</keyword>
<keyword id="KW-0648">Protein biosynthesis</keyword>
<proteinExistence type="inferred from homology"/>
<name>SYDND_BARBK</name>
<sequence>MHRYRSHNCAALRKCDVGTQVRLSGWVHRVRDHGGILFVDLRDHFGITQIVVNPDSSAFQIMEKVRSEWVICVDGKVCARSDEVINTTLPTGEIEIFADEIEILSKSDELPLPVFGEPDYPEDIRLKYRFLDLRRVTMHKNIMRRTEIISSIRRHMQDSGFTEFTTPLLTASSPEGARDFLVPSRIHQGKFYALPQAPQQYKQLLMMSGFDRYFQIAPCFRDEDPRADRLPGEFYQLDIEMSFVEQEDVLATMEPIIRSVFEEFSDGKLVTQSFPRISYDEAMRKYGSDKPDLRNPIIIEDVSQHFYDSDFKVFAQILANNENAQVWAIPAKTGGNRAFCDRMNGWAQGEGQPGLGYIFWRKEGENFEGAGPIAKNIGEQRTEAIRTQLGLKEGDACFFVAGDPKKFASFAGASRTRIGEELDLIDSKCFSFAWIVDFPFFEWNEDEKKIDFAHNPFSMPQGGMNAVDSQDPLTIKAFQYDLVCNGYEIASGGIRNHSPEMMLKVFNLAGLSREIVEERFGGLYRAFHYGAPPHGGMAAGVDRIVMLLQGVKNLREISLFPMNQQALDLLMSAPSDVSATQLNDLGIRIFPKVNNA</sequence>
<gene>
    <name evidence="1" type="primary">aspS</name>
    <name type="ordered locus">BARBAKC583_0868</name>
</gene>
<reference key="1">
    <citation type="submission" date="2006-12" db="EMBL/GenBank/DDBJ databases">
        <authorList>
            <person name="Hendrix L."/>
            <person name="Mohamoud Y."/>
            <person name="Radune D."/>
            <person name="Shvartsbeyn A."/>
            <person name="Daugherty S."/>
            <person name="Dodson R."/>
            <person name="Durkin A.S."/>
            <person name="Harkins D."/>
            <person name="Huot H."/>
            <person name="Kothari S.P."/>
            <person name="Madupu R."/>
            <person name="Li J."/>
            <person name="Nelson W.C."/>
            <person name="Shrivastava S."/>
            <person name="Giglio M.G."/>
            <person name="Haft D."/>
            <person name="Selengut J."/>
            <person name="Fraser-Ligget C."/>
            <person name="Seshadri R."/>
        </authorList>
    </citation>
    <scope>NUCLEOTIDE SEQUENCE [LARGE SCALE GENOMIC DNA]</scope>
    <source>
        <strain>ATCC 35685 / KC583 / Herrer 020/F12,63</strain>
    </source>
</reference>
<organism>
    <name type="scientific">Bartonella bacilliformis (strain ATCC 35685 / KC583 / Herrer 020/F12,63)</name>
    <dbReference type="NCBI Taxonomy" id="360095"/>
    <lineage>
        <taxon>Bacteria</taxon>
        <taxon>Pseudomonadati</taxon>
        <taxon>Pseudomonadota</taxon>
        <taxon>Alphaproteobacteria</taxon>
        <taxon>Hyphomicrobiales</taxon>
        <taxon>Bartonellaceae</taxon>
        <taxon>Bartonella</taxon>
    </lineage>
</organism>
<dbReference type="EC" id="6.1.1.23" evidence="1"/>
<dbReference type="EMBL" id="CP000524">
    <property type="protein sequence ID" value="ABM44906.1"/>
    <property type="molecule type" value="Genomic_DNA"/>
</dbReference>
<dbReference type="RefSeq" id="WP_005767274.1">
    <property type="nucleotide sequence ID" value="NC_008783.1"/>
</dbReference>
<dbReference type="SMR" id="A1UT52"/>
<dbReference type="STRING" id="360095.BARBAKC583_0868"/>
<dbReference type="GeneID" id="4685154"/>
<dbReference type="KEGG" id="bbk:BARBAKC583_0868"/>
<dbReference type="PATRIC" id="fig|360095.6.peg.846"/>
<dbReference type="eggNOG" id="COG0173">
    <property type="taxonomic scope" value="Bacteria"/>
</dbReference>
<dbReference type="HOGENOM" id="CLU_014330_3_2_5"/>
<dbReference type="OrthoDB" id="9802326at2"/>
<dbReference type="Proteomes" id="UP000000643">
    <property type="component" value="Chromosome"/>
</dbReference>
<dbReference type="GO" id="GO:0005737">
    <property type="term" value="C:cytoplasm"/>
    <property type="evidence" value="ECO:0007669"/>
    <property type="project" value="UniProtKB-SubCell"/>
</dbReference>
<dbReference type="GO" id="GO:0004815">
    <property type="term" value="F:aspartate-tRNA ligase activity"/>
    <property type="evidence" value="ECO:0007669"/>
    <property type="project" value="UniProtKB-UniRule"/>
</dbReference>
<dbReference type="GO" id="GO:0050560">
    <property type="term" value="F:aspartate-tRNA(Asn) ligase activity"/>
    <property type="evidence" value="ECO:0007669"/>
    <property type="project" value="UniProtKB-EC"/>
</dbReference>
<dbReference type="GO" id="GO:0005524">
    <property type="term" value="F:ATP binding"/>
    <property type="evidence" value="ECO:0007669"/>
    <property type="project" value="UniProtKB-UniRule"/>
</dbReference>
<dbReference type="GO" id="GO:0003676">
    <property type="term" value="F:nucleic acid binding"/>
    <property type="evidence" value="ECO:0007669"/>
    <property type="project" value="InterPro"/>
</dbReference>
<dbReference type="GO" id="GO:0006422">
    <property type="term" value="P:aspartyl-tRNA aminoacylation"/>
    <property type="evidence" value="ECO:0007669"/>
    <property type="project" value="UniProtKB-UniRule"/>
</dbReference>
<dbReference type="CDD" id="cd00777">
    <property type="entry name" value="AspRS_core"/>
    <property type="match status" value="1"/>
</dbReference>
<dbReference type="CDD" id="cd04317">
    <property type="entry name" value="EcAspRS_like_N"/>
    <property type="match status" value="1"/>
</dbReference>
<dbReference type="Gene3D" id="3.30.930.10">
    <property type="entry name" value="Bira Bifunctional Protein, Domain 2"/>
    <property type="match status" value="1"/>
</dbReference>
<dbReference type="Gene3D" id="3.30.1360.30">
    <property type="entry name" value="GAD-like domain"/>
    <property type="match status" value="1"/>
</dbReference>
<dbReference type="Gene3D" id="2.40.50.140">
    <property type="entry name" value="Nucleic acid-binding proteins"/>
    <property type="match status" value="1"/>
</dbReference>
<dbReference type="HAMAP" id="MF_00044">
    <property type="entry name" value="Asp_tRNA_synth_type1"/>
    <property type="match status" value="1"/>
</dbReference>
<dbReference type="InterPro" id="IPR004364">
    <property type="entry name" value="Aa-tRNA-synt_II"/>
</dbReference>
<dbReference type="InterPro" id="IPR006195">
    <property type="entry name" value="aa-tRNA-synth_II"/>
</dbReference>
<dbReference type="InterPro" id="IPR045864">
    <property type="entry name" value="aa-tRNA-synth_II/BPL/LPL"/>
</dbReference>
<dbReference type="InterPro" id="IPR004524">
    <property type="entry name" value="Asp-tRNA-ligase_1"/>
</dbReference>
<dbReference type="InterPro" id="IPR047089">
    <property type="entry name" value="Asp-tRNA-ligase_1_N"/>
</dbReference>
<dbReference type="InterPro" id="IPR002312">
    <property type="entry name" value="Asp/Asn-tRNA-synth_IIb"/>
</dbReference>
<dbReference type="InterPro" id="IPR047090">
    <property type="entry name" value="AspRS_core"/>
</dbReference>
<dbReference type="InterPro" id="IPR004115">
    <property type="entry name" value="GAD-like_sf"/>
</dbReference>
<dbReference type="InterPro" id="IPR029351">
    <property type="entry name" value="GAD_dom"/>
</dbReference>
<dbReference type="InterPro" id="IPR012340">
    <property type="entry name" value="NA-bd_OB-fold"/>
</dbReference>
<dbReference type="InterPro" id="IPR004365">
    <property type="entry name" value="NA-bd_OB_tRNA"/>
</dbReference>
<dbReference type="NCBIfam" id="TIGR00459">
    <property type="entry name" value="aspS_bact"/>
    <property type="match status" value="1"/>
</dbReference>
<dbReference type="NCBIfam" id="NF001750">
    <property type="entry name" value="PRK00476.1"/>
    <property type="match status" value="1"/>
</dbReference>
<dbReference type="PANTHER" id="PTHR22594:SF5">
    <property type="entry name" value="ASPARTATE--TRNA LIGASE, MITOCHONDRIAL"/>
    <property type="match status" value="1"/>
</dbReference>
<dbReference type="PANTHER" id="PTHR22594">
    <property type="entry name" value="ASPARTYL/LYSYL-TRNA SYNTHETASE"/>
    <property type="match status" value="1"/>
</dbReference>
<dbReference type="Pfam" id="PF02938">
    <property type="entry name" value="GAD"/>
    <property type="match status" value="1"/>
</dbReference>
<dbReference type="Pfam" id="PF00152">
    <property type="entry name" value="tRNA-synt_2"/>
    <property type="match status" value="1"/>
</dbReference>
<dbReference type="Pfam" id="PF01336">
    <property type="entry name" value="tRNA_anti-codon"/>
    <property type="match status" value="1"/>
</dbReference>
<dbReference type="PRINTS" id="PR01042">
    <property type="entry name" value="TRNASYNTHASP"/>
</dbReference>
<dbReference type="SUPFAM" id="SSF55681">
    <property type="entry name" value="Class II aaRS and biotin synthetases"/>
    <property type="match status" value="1"/>
</dbReference>
<dbReference type="SUPFAM" id="SSF55261">
    <property type="entry name" value="GAD domain-like"/>
    <property type="match status" value="1"/>
</dbReference>
<dbReference type="SUPFAM" id="SSF50249">
    <property type="entry name" value="Nucleic acid-binding proteins"/>
    <property type="match status" value="1"/>
</dbReference>
<dbReference type="PROSITE" id="PS50862">
    <property type="entry name" value="AA_TRNA_LIGASE_II"/>
    <property type="match status" value="1"/>
</dbReference>
<feature type="chain" id="PRO_1000006638" description="Aspartate--tRNA(Asp/Asn) ligase">
    <location>
        <begin position="1"/>
        <end position="596"/>
    </location>
</feature>
<feature type="region of interest" description="Aspartate" evidence="1">
    <location>
        <begin position="199"/>
        <end position="202"/>
    </location>
</feature>
<feature type="binding site" evidence="1">
    <location>
        <position position="175"/>
    </location>
    <ligand>
        <name>L-aspartate</name>
        <dbReference type="ChEBI" id="CHEBI:29991"/>
    </ligand>
</feature>
<feature type="binding site" evidence="1">
    <location>
        <begin position="221"/>
        <end position="223"/>
    </location>
    <ligand>
        <name>ATP</name>
        <dbReference type="ChEBI" id="CHEBI:30616"/>
    </ligand>
</feature>
<feature type="binding site" evidence="1">
    <location>
        <position position="221"/>
    </location>
    <ligand>
        <name>L-aspartate</name>
        <dbReference type="ChEBI" id="CHEBI:29991"/>
    </ligand>
</feature>
<feature type="binding site" evidence="1">
    <location>
        <position position="454"/>
    </location>
    <ligand>
        <name>L-aspartate</name>
        <dbReference type="ChEBI" id="CHEBI:29991"/>
    </ligand>
</feature>
<feature type="binding site" evidence="1">
    <location>
        <position position="488"/>
    </location>
    <ligand>
        <name>ATP</name>
        <dbReference type="ChEBI" id="CHEBI:30616"/>
    </ligand>
</feature>
<feature type="binding site" evidence="1">
    <location>
        <position position="495"/>
    </location>
    <ligand>
        <name>L-aspartate</name>
        <dbReference type="ChEBI" id="CHEBI:29991"/>
    </ligand>
</feature>
<feature type="binding site" evidence="1">
    <location>
        <begin position="540"/>
        <end position="543"/>
    </location>
    <ligand>
        <name>ATP</name>
        <dbReference type="ChEBI" id="CHEBI:30616"/>
    </ligand>
</feature>
<feature type="site" description="Important for tRNA non-discrimination" evidence="1">
    <location>
        <position position="33"/>
    </location>
</feature>
<accession>A1UT52</accession>
<evidence type="ECO:0000255" key="1">
    <source>
        <dbReference type="HAMAP-Rule" id="MF_00044"/>
    </source>
</evidence>
<protein>
    <recommendedName>
        <fullName evidence="1">Aspartate--tRNA(Asp/Asn) ligase</fullName>
        <ecNumber evidence="1">6.1.1.23</ecNumber>
    </recommendedName>
    <alternativeName>
        <fullName evidence="1">Aspartyl-tRNA synthetase</fullName>
        <shortName evidence="1">AspRS</shortName>
    </alternativeName>
    <alternativeName>
        <fullName evidence="1">Non-discriminating aspartyl-tRNA synthetase</fullName>
        <shortName evidence="1">ND-AspRS</shortName>
    </alternativeName>
</protein>